<gene>
    <name type="primary">EFT1</name>
    <name type="ordered locus">DEHA2G05742g</name>
</gene>
<organism>
    <name type="scientific">Debaryomyces hansenii (strain ATCC 36239 / CBS 767 / BCRC 21394 / JCM 1990 / NBRC 0083 / IGC 2968)</name>
    <name type="common">Yeast</name>
    <name type="synonym">Torulaspora hansenii</name>
    <dbReference type="NCBI Taxonomy" id="284592"/>
    <lineage>
        <taxon>Eukaryota</taxon>
        <taxon>Fungi</taxon>
        <taxon>Dikarya</taxon>
        <taxon>Ascomycota</taxon>
        <taxon>Saccharomycotina</taxon>
        <taxon>Pichiomycetes</taxon>
        <taxon>Debaryomycetaceae</taxon>
        <taxon>Debaryomyces</taxon>
    </lineage>
</organism>
<dbReference type="EC" id="3.6.5.-" evidence="1"/>
<dbReference type="EMBL" id="CR382139">
    <property type="protein sequence ID" value="CAG90255.1"/>
    <property type="molecule type" value="Genomic_DNA"/>
</dbReference>
<dbReference type="RefSeq" id="XP_461796.1">
    <property type="nucleotide sequence ID" value="XM_461796.1"/>
</dbReference>
<dbReference type="SMR" id="Q6BJ25"/>
<dbReference type="FunCoup" id="Q6BJ25">
    <property type="interactions" value="1311"/>
</dbReference>
<dbReference type="STRING" id="284592.Q6BJ25"/>
<dbReference type="GeneID" id="2904673"/>
<dbReference type="KEGG" id="dha:DEHA2G05742g"/>
<dbReference type="VEuPathDB" id="FungiDB:DEHA2G05742g"/>
<dbReference type="eggNOG" id="KOG0469">
    <property type="taxonomic scope" value="Eukaryota"/>
</dbReference>
<dbReference type="HOGENOM" id="CLU_002794_11_2_1"/>
<dbReference type="InParanoid" id="Q6BJ25"/>
<dbReference type="OMA" id="ASWNTEN"/>
<dbReference type="OrthoDB" id="364892at2759"/>
<dbReference type="Proteomes" id="UP000000599">
    <property type="component" value="Chromosome G"/>
</dbReference>
<dbReference type="GO" id="GO:0005829">
    <property type="term" value="C:cytosol"/>
    <property type="evidence" value="ECO:0007669"/>
    <property type="project" value="TreeGrafter"/>
</dbReference>
<dbReference type="GO" id="GO:1990904">
    <property type="term" value="C:ribonucleoprotein complex"/>
    <property type="evidence" value="ECO:0007669"/>
    <property type="project" value="TreeGrafter"/>
</dbReference>
<dbReference type="GO" id="GO:0005525">
    <property type="term" value="F:GTP binding"/>
    <property type="evidence" value="ECO:0007669"/>
    <property type="project" value="UniProtKB-KW"/>
</dbReference>
<dbReference type="GO" id="GO:0003924">
    <property type="term" value="F:GTPase activity"/>
    <property type="evidence" value="ECO:0007669"/>
    <property type="project" value="InterPro"/>
</dbReference>
<dbReference type="GO" id="GO:0043022">
    <property type="term" value="F:ribosome binding"/>
    <property type="evidence" value="ECO:0007669"/>
    <property type="project" value="TreeGrafter"/>
</dbReference>
<dbReference type="GO" id="GO:0003746">
    <property type="term" value="F:translation elongation factor activity"/>
    <property type="evidence" value="ECO:0007669"/>
    <property type="project" value="UniProtKB-KW"/>
</dbReference>
<dbReference type="CDD" id="cd01681">
    <property type="entry name" value="aeEF2_snRNP_like_IV"/>
    <property type="match status" value="1"/>
</dbReference>
<dbReference type="CDD" id="cd04096">
    <property type="entry name" value="eEF2_snRNP_like_C"/>
    <property type="match status" value="1"/>
</dbReference>
<dbReference type="CDD" id="cd01885">
    <property type="entry name" value="EF2"/>
    <property type="match status" value="1"/>
</dbReference>
<dbReference type="CDD" id="cd16261">
    <property type="entry name" value="EF2_snRNP_III"/>
    <property type="match status" value="1"/>
</dbReference>
<dbReference type="CDD" id="cd03700">
    <property type="entry name" value="EF2_snRNP_like_II"/>
    <property type="match status" value="1"/>
</dbReference>
<dbReference type="FunFam" id="3.90.1430.10:FF:000003">
    <property type="entry name" value="Elongation factor 2"/>
    <property type="match status" value="1"/>
</dbReference>
<dbReference type="FunFam" id="2.40.30.10:FF:000010">
    <property type="entry name" value="Translation elongation factor 2"/>
    <property type="match status" value="1"/>
</dbReference>
<dbReference type="FunFam" id="3.30.230.10:FF:000006">
    <property type="entry name" value="Translation elongation factor 2"/>
    <property type="match status" value="1"/>
</dbReference>
<dbReference type="FunFam" id="3.30.70.240:FF:000003">
    <property type="entry name" value="Translation elongation factor 2"/>
    <property type="match status" value="1"/>
</dbReference>
<dbReference type="FunFam" id="3.30.70.870:FF:000002">
    <property type="entry name" value="Translation elongation factor 2"/>
    <property type="match status" value="1"/>
</dbReference>
<dbReference type="FunFam" id="3.40.50.300:FF:000058">
    <property type="entry name" value="Translation elongation factor 2"/>
    <property type="match status" value="1"/>
</dbReference>
<dbReference type="Gene3D" id="3.30.230.10">
    <property type="match status" value="1"/>
</dbReference>
<dbReference type="Gene3D" id="3.30.70.240">
    <property type="match status" value="1"/>
</dbReference>
<dbReference type="Gene3D" id="3.30.70.870">
    <property type="entry name" value="Elongation Factor G (Translational Gtpase), domain 3"/>
    <property type="match status" value="1"/>
</dbReference>
<dbReference type="Gene3D" id="3.40.50.300">
    <property type="entry name" value="P-loop containing nucleotide triphosphate hydrolases"/>
    <property type="match status" value="1"/>
</dbReference>
<dbReference type="Gene3D" id="2.40.30.10">
    <property type="entry name" value="Translation factors"/>
    <property type="match status" value="1"/>
</dbReference>
<dbReference type="InterPro" id="IPR041095">
    <property type="entry name" value="EFG_II"/>
</dbReference>
<dbReference type="InterPro" id="IPR035647">
    <property type="entry name" value="EFG_III/V"/>
</dbReference>
<dbReference type="InterPro" id="IPR000640">
    <property type="entry name" value="EFG_V-like"/>
</dbReference>
<dbReference type="InterPro" id="IPR004161">
    <property type="entry name" value="EFTu-like_2"/>
</dbReference>
<dbReference type="InterPro" id="IPR031157">
    <property type="entry name" value="G_TR_CS"/>
</dbReference>
<dbReference type="InterPro" id="IPR027417">
    <property type="entry name" value="P-loop_NTPase"/>
</dbReference>
<dbReference type="InterPro" id="IPR020568">
    <property type="entry name" value="Ribosomal_Su5_D2-typ_SF"/>
</dbReference>
<dbReference type="InterPro" id="IPR014721">
    <property type="entry name" value="Ribsml_uS5_D2-typ_fold_subgr"/>
</dbReference>
<dbReference type="InterPro" id="IPR005225">
    <property type="entry name" value="Small_GTP-bd"/>
</dbReference>
<dbReference type="InterPro" id="IPR000795">
    <property type="entry name" value="T_Tr_GTP-bd_dom"/>
</dbReference>
<dbReference type="InterPro" id="IPR009000">
    <property type="entry name" value="Transl_B-barrel_sf"/>
</dbReference>
<dbReference type="InterPro" id="IPR005517">
    <property type="entry name" value="Transl_elong_EFG/EF2_IV"/>
</dbReference>
<dbReference type="NCBIfam" id="TIGR00231">
    <property type="entry name" value="small_GTP"/>
    <property type="match status" value="1"/>
</dbReference>
<dbReference type="PANTHER" id="PTHR42908:SF10">
    <property type="entry name" value="EUKARYOTIC TRANSLATION ELONGATION FACTOR 2"/>
    <property type="match status" value="1"/>
</dbReference>
<dbReference type="PANTHER" id="PTHR42908">
    <property type="entry name" value="TRANSLATION ELONGATION FACTOR-RELATED"/>
    <property type="match status" value="1"/>
</dbReference>
<dbReference type="Pfam" id="PF00679">
    <property type="entry name" value="EFG_C"/>
    <property type="match status" value="1"/>
</dbReference>
<dbReference type="Pfam" id="PF14492">
    <property type="entry name" value="EFG_III"/>
    <property type="match status" value="1"/>
</dbReference>
<dbReference type="Pfam" id="PF03764">
    <property type="entry name" value="EFG_IV"/>
    <property type="match status" value="1"/>
</dbReference>
<dbReference type="Pfam" id="PF00009">
    <property type="entry name" value="GTP_EFTU"/>
    <property type="match status" value="1"/>
</dbReference>
<dbReference type="Pfam" id="PF03144">
    <property type="entry name" value="GTP_EFTU_D2"/>
    <property type="match status" value="1"/>
</dbReference>
<dbReference type="PRINTS" id="PR00315">
    <property type="entry name" value="ELONGATNFCT"/>
</dbReference>
<dbReference type="SMART" id="SM00838">
    <property type="entry name" value="EFG_C"/>
    <property type="match status" value="1"/>
</dbReference>
<dbReference type="SMART" id="SM00889">
    <property type="entry name" value="EFG_IV"/>
    <property type="match status" value="1"/>
</dbReference>
<dbReference type="SUPFAM" id="SSF54980">
    <property type="entry name" value="EF-G C-terminal domain-like"/>
    <property type="match status" value="2"/>
</dbReference>
<dbReference type="SUPFAM" id="SSF52540">
    <property type="entry name" value="P-loop containing nucleoside triphosphate hydrolases"/>
    <property type="match status" value="1"/>
</dbReference>
<dbReference type="SUPFAM" id="SSF54211">
    <property type="entry name" value="Ribosomal protein S5 domain 2-like"/>
    <property type="match status" value="1"/>
</dbReference>
<dbReference type="SUPFAM" id="SSF50447">
    <property type="entry name" value="Translation proteins"/>
    <property type="match status" value="1"/>
</dbReference>
<dbReference type="PROSITE" id="PS00301">
    <property type="entry name" value="G_TR_1"/>
    <property type="match status" value="1"/>
</dbReference>
<dbReference type="PROSITE" id="PS51722">
    <property type="entry name" value="G_TR_2"/>
    <property type="match status" value="1"/>
</dbReference>
<accession>Q6BJ25</accession>
<feature type="chain" id="PRO_0000091017" description="Elongation factor 2">
    <location>
        <begin position="1"/>
        <end position="842"/>
    </location>
</feature>
<feature type="domain" description="tr-type G" evidence="2">
    <location>
        <begin position="17"/>
        <end position="253"/>
    </location>
</feature>
<feature type="binding site" evidence="1">
    <location>
        <begin position="26"/>
        <end position="33"/>
    </location>
    <ligand>
        <name>GTP</name>
        <dbReference type="ChEBI" id="CHEBI:37565"/>
    </ligand>
</feature>
<feature type="binding site" evidence="1">
    <location>
        <begin position="158"/>
        <end position="161"/>
    </location>
    <ligand>
        <name>GTP</name>
        <dbReference type="ChEBI" id="CHEBI:37565"/>
    </ligand>
</feature>
<feature type="binding site" evidence="1">
    <location>
        <begin position="213"/>
        <end position="215"/>
    </location>
    <ligand>
        <name>GTP</name>
        <dbReference type="ChEBI" id="CHEBI:37565"/>
    </ligand>
</feature>
<feature type="modified residue" description="Diphthamide" evidence="1">
    <location>
        <position position="699"/>
    </location>
</feature>
<sequence>MVAFTIEQIRELMDKVTNVRNMSVIAHVDHGKSTLTDSLVQRAGIISAAKAGEARFTDTRKDEQERGITIKSTAISLYASMTDDDCKEIQQKTVGNSFLINLIDSPGHVDFSSEVTAALRVTDGALVVVDCVEGVCVQTETVLRQALGERIKPVVIINKVDRALLELQVTKEDLYQSFSRTIESVNVIISTYVDSSLGDSQVYPDKGTVAFGSGLHGWAFTVRQFATRYSKKFGVDRIKMMERLWGDSYFNPKTKKWTNKDKDAEGKTLERAFNMFVLDPIFRLFSSIMNFKKSEIPTLLEKLEINLKAEEKELEGKALLKVVMRKFLPAADALLEMIVIHLPSPVTAQAYRAETLYEGPADDASCIAIKNCDPTADLMVYISKMVPTSDKGRFYAFGRVFAGTVKSGQKVRIQGPNYQVGKKDDLFVKAIQRTVLMMGRFVEAIDDCPAGNIVGLVGVDQFLLKSGTITTNEASHNMKVMKFSVSPVVQVAVEVKNANDLPKLVEGLKRLSKSDPCVLTSMSESGEHIVAATGELHLEICLSDLQNDHAGIPLKISPPIVSYRETVNAESSMVALSKSPNKHNRIYVKAQPIDEEVSLDIEKGVINPRDDFKARARILADNHGWDVTDARKIWCFGPDGNGPNLVVDQTKAVQYLNEIKDSVVAAFQWATKEGPIFGENVRSVRVNILDVTLHADAIHRGGGQIIPTMRRVTYASMLLAEPAIQEPVFLVEIQCPENAIGGIYSVLNKKRGQVISEEQRPGTPLFTVKAYLPVNESFGFSGELRQSTGGQAFPQLIFDHWANLNGDPTDPTSKVGTIVKEKRERQGMKPDVPGYEEYYDKL</sequence>
<evidence type="ECO:0000250" key="1">
    <source>
        <dbReference type="UniProtKB" id="P32324"/>
    </source>
</evidence>
<evidence type="ECO:0000255" key="2">
    <source>
        <dbReference type="PROSITE-ProRule" id="PRU01059"/>
    </source>
</evidence>
<proteinExistence type="inferred from homology"/>
<comment type="function">
    <text evidence="1">Catalyzes the GTP-dependent ribosomal translocation step during translation elongation. During this step, the ribosome changes from the pre-translocational (PRE) to the post-translocational (POST) state as the newly formed A-site-bound peptidyl-tRNA and P-site-bound deacylated tRNA move to the P and E sites, respectively. Catalyzes the coordinated movement of the two tRNA molecules, the mRNA and conformational changes in the ribosome.</text>
</comment>
<comment type="catalytic activity">
    <reaction evidence="1">
        <text>GTP + H2O = GDP + phosphate + H(+)</text>
        <dbReference type="Rhea" id="RHEA:19669"/>
        <dbReference type="ChEBI" id="CHEBI:15377"/>
        <dbReference type="ChEBI" id="CHEBI:15378"/>
        <dbReference type="ChEBI" id="CHEBI:37565"/>
        <dbReference type="ChEBI" id="CHEBI:43474"/>
        <dbReference type="ChEBI" id="CHEBI:58189"/>
    </reaction>
    <physiologicalReaction direction="left-to-right" evidence="1">
        <dbReference type="Rhea" id="RHEA:19670"/>
    </physiologicalReaction>
</comment>
<comment type="subcellular location">
    <subcellularLocation>
        <location evidence="1">Cytoplasm</location>
    </subcellularLocation>
</comment>
<comment type="similarity">
    <text evidence="2">Belongs to the TRAFAC class translation factor GTPase superfamily. Classic translation factor GTPase family. EF-G/EF-2 subfamily.</text>
</comment>
<reference key="1">
    <citation type="journal article" date="2004" name="Nature">
        <title>Genome evolution in yeasts.</title>
        <authorList>
            <person name="Dujon B."/>
            <person name="Sherman D."/>
            <person name="Fischer G."/>
            <person name="Durrens P."/>
            <person name="Casaregola S."/>
            <person name="Lafontaine I."/>
            <person name="de Montigny J."/>
            <person name="Marck C."/>
            <person name="Neuveglise C."/>
            <person name="Talla E."/>
            <person name="Goffard N."/>
            <person name="Frangeul L."/>
            <person name="Aigle M."/>
            <person name="Anthouard V."/>
            <person name="Babour A."/>
            <person name="Barbe V."/>
            <person name="Barnay S."/>
            <person name="Blanchin S."/>
            <person name="Beckerich J.-M."/>
            <person name="Beyne E."/>
            <person name="Bleykasten C."/>
            <person name="Boisrame A."/>
            <person name="Boyer J."/>
            <person name="Cattolico L."/>
            <person name="Confanioleri F."/>
            <person name="de Daruvar A."/>
            <person name="Despons L."/>
            <person name="Fabre E."/>
            <person name="Fairhead C."/>
            <person name="Ferry-Dumazet H."/>
            <person name="Groppi A."/>
            <person name="Hantraye F."/>
            <person name="Hennequin C."/>
            <person name="Jauniaux N."/>
            <person name="Joyet P."/>
            <person name="Kachouri R."/>
            <person name="Kerrest A."/>
            <person name="Koszul R."/>
            <person name="Lemaire M."/>
            <person name="Lesur I."/>
            <person name="Ma L."/>
            <person name="Muller H."/>
            <person name="Nicaud J.-M."/>
            <person name="Nikolski M."/>
            <person name="Oztas S."/>
            <person name="Ozier-Kalogeropoulos O."/>
            <person name="Pellenz S."/>
            <person name="Potier S."/>
            <person name="Richard G.-F."/>
            <person name="Straub M.-L."/>
            <person name="Suleau A."/>
            <person name="Swennen D."/>
            <person name="Tekaia F."/>
            <person name="Wesolowski-Louvel M."/>
            <person name="Westhof E."/>
            <person name="Wirth B."/>
            <person name="Zeniou-Meyer M."/>
            <person name="Zivanovic Y."/>
            <person name="Bolotin-Fukuhara M."/>
            <person name="Thierry A."/>
            <person name="Bouchier C."/>
            <person name="Caudron B."/>
            <person name="Scarpelli C."/>
            <person name="Gaillardin C."/>
            <person name="Weissenbach J."/>
            <person name="Wincker P."/>
            <person name="Souciet J.-L."/>
        </authorList>
    </citation>
    <scope>NUCLEOTIDE SEQUENCE [LARGE SCALE GENOMIC DNA]</scope>
    <source>
        <strain>ATCC 36239 / CBS 767 / BCRC 21394 / JCM 1990 / NBRC 0083 / IGC 2968</strain>
    </source>
</reference>
<keyword id="KW-0963">Cytoplasm</keyword>
<keyword id="KW-0251">Elongation factor</keyword>
<keyword id="KW-0342">GTP-binding</keyword>
<keyword id="KW-0378">Hydrolase</keyword>
<keyword id="KW-0547">Nucleotide-binding</keyword>
<keyword id="KW-0648">Protein biosynthesis</keyword>
<keyword id="KW-1185">Reference proteome</keyword>
<protein>
    <recommendedName>
        <fullName>Elongation factor 2</fullName>
        <shortName>EF-2</shortName>
        <ecNumber evidence="1">3.6.5.-</ecNumber>
    </recommendedName>
</protein>
<name>EF2_DEBHA</name>